<evidence type="ECO:0000250" key="1"/>
<evidence type="ECO:0000255" key="2">
    <source>
        <dbReference type="HAMAP-Rule" id="MF_00100"/>
    </source>
</evidence>
<comment type="function">
    <text evidence="2">Function in general translation initiation by promoting the binding of the formylmethionine-tRNA to ribosomes. Seems to function along with eIF-2.</text>
</comment>
<comment type="similarity">
    <text evidence="2">Belongs to the TRAFAC class translation factor GTPase superfamily. Classic translation factor GTPase family. IF-2 subfamily.</text>
</comment>
<organism>
    <name type="scientific">Pyrobaculum aerophilum (strain ATCC 51768 / DSM 7523 / JCM 9630 / CIP 104966 / NBRC 100827 / IM2)</name>
    <dbReference type="NCBI Taxonomy" id="178306"/>
    <lineage>
        <taxon>Archaea</taxon>
        <taxon>Thermoproteota</taxon>
        <taxon>Thermoprotei</taxon>
        <taxon>Thermoproteales</taxon>
        <taxon>Thermoproteaceae</taxon>
        <taxon>Pyrobaculum</taxon>
    </lineage>
</organism>
<dbReference type="EMBL" id="AE009441">
    <property type="protein sequence ID" value="AAL63529.1"/>
    <property type="molecule type" value="Genomic_DNA"/>
</dbReference>
<dbReference type="RefSeq" id="WP_011008002.1">
    <property type="nucleotide sequence ID" value="NC_003364.1"/>
</dbReference>
<dbReference type="SMR" id="Q8ZX20"/>
<dbReference type="FunCoup" id="Q8ZX20">
    <property type="interactions" value="98"/>
</dbReference>
<dbReference type="STRING" id="178306.PAE1513"/>
<dbReference type="EnsemblBacteria" id="AAL63529">
    <property type="protein sequence ID" value="AAL63529"/>
    <property type="gene ID" value="PAE1513"/>
</dbReference>
<dbReference type="GeneID" id="1465772"/>
<dbReference type="KEGG" id="pai:PAE1513"/>
<dbReference type="PATRIC" id="fig|178306.9.peg.1116"/>
<dbReference type="eggNOG" id="arCOG01560">
    <property type="taxonomic scope" value="Archaea"/>
</dbReference>
<dbReference type="HOGENOM" id="CLU_002656_3_3_2"/>
<dbReference type="InParanoid" id="Q8ZX20"/>
<dbReference type="Proteomes" id="UP000002439">
    <property type="component" value="Chromosome"/>
</dbReference>
<dbReference type="GO" id="GO:0005737">
    <property type="term" value="C:cytoplasm"/>
    <property type="evidence" value="ECO:0000318"/>
    <property type="project" value="GO_Central"/>
</dbReference>
<dbReference type="GO" id="GO:0005525">
    <property type="term" value="F:GTP binding"/>
    <property type="evidence" value="ECO:0007669"/>
    <property type="project" value="UniProtKB-KW"/>
</dbReference>
<dbReference type="GO" id="GO:0003924">
    <property type="term" value="F:GTPase activity"/>
    <property type="evidence" value="ECO:0007669"/>
    <property type="project" value="UniProtKB-UniRule"/>
</dbReference>
<dbReference type="GO" id="GO:0003743">
    <property type="term" value="F:translation initiation factor activity"/>
    <property type="evidence" value="ECO:0000318"/>
    <property type="project" value="GO_Central"/>
</dbReference>
<dbReference type="GO" id="GO:0006413">
    <property type="term" value="P:translational initiation"/>
    <property type="evidence" value="ECO:0000318"/>
    <property type="project" value="GO_Central"/>
</dbReference>
<dbReference type="CDD" id="cd03703">
    <property type="entry name" value="aeIF5B_II"/>
    <property type="match status" value="1"/>
</dbReference>
<dbReference type="CDD" id="cd16266">
    <property type="entry name" value="IF2_aeIF5B_IV"/>
    <property type="match status" value="1"/>
</dbReference>
<dbReference type="CDD" id="cd01887">
    <property type="entry name" value="IF2_eIF5B"/>
    <property type="match status" value="1"/>
</dbReference>
<dbReference type="FunFam" id="3.40.50.300:FF:000112">
    <property type="entry name" value="Eukaryotic translation initiation factor 5B"/>
    <property type="match status" value="1"/>
</dbReference>
<dbReference type="FunFam" id="2.40.30.10:FF:000152">
    <property type="entry name" value="Probable translation initiation factor IF-2"/>
    <property type="match status" value="1"/>
</dbReference>
<dbReference type="FunFam" id="3.40.50.10050:FF:000001">
    <property type="entry name" value="Translation initiation factor IF-2"/>
    <property type="match status" value="1"/>
</dbReference>
<dbReference type="Gene3D" id="3.40.50.300">
    <property type="entry name" value="P-loop containing nucleotide triphosphate hydrolases"/>
    <property type="match status" value="1"/>
</dbReference>
<dbReference type="Gene3D" id="2.40.30.10">
    <property type="entry name" value="Translation factors"/>
    <property type="match status" value="2"/>
</dbReference>
<dbReference type="Gene3D" id="3.40.50.10050">
    <property type="entry name" value="Translation initiation factor IF- 2, domain 3"/>
    <property type="match status" value="1"/>
</dbReference>
<dbReference type="HAMAP" id="MF_00100_A">
    <property type="entry name" value="IF_2_A"/>
    <property type="match status" value="1"/>
</dbReference>
<dbReference type="InterPro" id="IPR029459">
    <property type="entry name" value="EFTU-type"/>
</dbReference>
<dbReference type="InterPro" id="IPR027417">
    <property type="entry name" value="P-loop_NTPase"/>
</dbReference>
<dbReference type="InterPro" id="IPR005225">
    <property type="entry name" value="Small_GTP-bd"/>
</dbReference>
<dbReference type="InterPro" id="IPR000795">
    <property type="entry name" value="T_Tr_GTP-bd_dom"/>
</dbReference>
<dbReference type="InterPro" id="IPR004544">
    <property type="entry name" value="TF_aIF-2_arc"/>
</dbReference>
<dbReference type="InterPro" id="IPR015760">
    <property type="entry name" value="TIF_IF2"/>
</dbReference>
<dbReference type="InterPro" id="IPR023115">
    <property type="entry name" value="TIF_IF2_dom3"/>
</dbReference>
<dbReference type="InterPro" id="IPR036925">
    <property type="entry name" value="TIF_IF2_dom3_sf"/>
</dbReference>
<dbReference type="InterPro" id="IPR009000">
    <property type="entry name" value="Transl_B-barrel_sf"/>
</dbReference>
<dbReference type="NCBIfam" id="TIGR00491">
    <property type="entry name" value="aIF-2"/>
    <property type="match status" value="1"/>
</dbReference>
<dbReference type="NCBIfam" id="NF003078">
    <property type="entry name" value="PRK04004.1"/>
    <property type="match status" value="1"/>
</dbReference>
<dbReference type="NCBIfam" id="TIGR00231">
    <property type="entry name" value="small_GTP"/>
    <property type="match status" value="1"/>
</dbReference>
<dbReference type="PANTHER" id="PTHR43381:SF4">
    <property type="entry name" value="EUKARYOTIC TRANSLATION INITIATION FACTOR 5B"/>
    <property type="match status" value="1"/>
</dbReference>
<dbReference type="PANTHER" id="PTHR43381">
    <property type="entry name" value="TRANSLATION INITIATION FACTOR IF-2-RELATED"/>
    <property type="match status" value="1"/>
</dbReference>
<dbReference type="Pfam" id="PF00009">
    <property type="entry name" value="GTP_EFTU"/>
    <property type="match status" value="1"/>
</dbReference>
<dbReference type="Pfam" id="PF14578">
    <property type="entry name" value="GTP_EFTU_D4"/>
    <property type="match status" value="1"/>
</dbReference>
<dbReference type="Pfam" id="PF11987">
    <property type="entry name" value="IF-2"/>
    <property type="match status" value="1"/>
</dbReference>
<dbReference type="PRINTS" id="PR00315">
    <property type="entry name" value="ELONGATNFCT"/>
</dbReference>
<dbReference type="SUPFAM" id="SSF52156">
    <property type="entry name" value="Initiation factor IF2/eIF5b, domain 3"/>
    <property type="match status" value="1"/>
</dbReference>
<dbReference type="SUPFAM" id="SSF52540">
    <property type="entry name" value="P-loop containing nucleoside triphosphate hydrolases"/>
    <property type="match status" value="1"/>
</dbReference>
<dbReference type="SUPFAM" id="SSF50447">
    <property type="entry name" value="Translation proteins"/>
    <property type="match status" value="1"/>
</dbReference>
<dbReference type="PROSITE" id="PS51722">
    <property type="entry name" value="G_TR_2"/>
    <property type="match status" value="1"/>
</dbReference>
<accession>Q8ZX20</accession>
<reference key="1">
    <citation type="journal article" date="2002" name="Proc. Natl. Acad. Sci. U.S.A.">
        <title>Genome sequence of the hyperthermophilic crenarchaeon Pyrobaculum aerophilum.</title>
        <authorList>
            <person name="Fitz-Gibbon S.T."/>
            <person name="Ladner H."/>
            <person name="Kim U.-J."/>
            <person name="Stetter K.O."/>
            <person name="Simon M.I."/>
            <person name="Miller J.H."/>
        </authorList>
    </citation>
    <scope>NUCLEOTIDE SEQUENCE [LARGE SCALE GENOMIC DNA]</scope>
    <source>
        <strain>ATCC 51768 / DSM 7523 / JCM 9630 / CIP 104966 / NBRC 100827 / IM2</strain>
    </source>
</reference>
<name>IF2P_PYRAE</name>
<protein>
    <recommendedName>
        <fullName evidence="2">Probable translation initiation factor IF-2</fullName>
    </recommendedName>
</protein>
<sequence>MSQVRSPFVVVMGHVDVGKTLLLDKIRGTSVAYREPGMITQHIGMSFVPWSAVEKFAGPLVDRLRLRGRIWIPGFLFIDTPGHAAFSNLRKRGGSVADLAILVVDITSGLEEQGVESLKLIQSRGVPFVIAANKLDRIYGWKSVENRPFLFAVEDQEWHAVATLEERIGKLIEELSRHGIDADRYDRVRDFSKQVPIVPTSAVTGEGIADLLLVLAGVSQRFIPRERLQVREGPAKGVVMEVKEERGLGVVADVILYDGTLRKGDVLVTASLEGPKEARVRMLIMPKPLEEMRDPEDKFMAVEEVKAAAGVRVVADGLEGVVAGSPLIAVWDPREIPNACNLVKEEISEIRIESDKEGVIVRADTFGTLESIVLFLRQQGVPVRKADVGPPTHKDVVEAVLSRRKNPIYGVILAFNVKTPPEVEKEAMSSGIKIIAGEILYRIFDEYIKWSQEVRTKTIEQILSQLTRPGKIQILPGFVFRRSDPAIVGVKVLAGTIKPGVTLVKDGREVGRIMQIQKTGRAINEAAAGDEVAISIHGDVIVGRQIKEGDILYVYVPDDQARQWLFQYRQYLREDELKALEEYLKSRRK</sequence>
<feature type="chain" id="PRO_0000137306" description="Probable translation initiation factor IF-2">
    <location>
        <begin position="1"/>
        <end position="589"/>
    </location>
</feature>
<feature type="domain" description="tr-type G">
    <location>
        <begin position="4"/>
        <end position="225"/>
    </location>
</feature>
<feature type="region of interest" description="G1" evidence="1">
    <location>
        <begin position="13"/>
        <end position="20"/>
    </location>
</feature>
<feature type="region of interest" description="G2" evidence="1">
    <location>
        <begin position="38"/>
        <end position="42"/>
    </location>
</feature>
<feature type="region of interest" description="G3" evidence="1">
    <location>
        <begin position="79"/>
        <end position="82"/>
    </location>
</feature>
<feature type="region of interest" description="G4" evidence="1">
    <location>
        <begin position="133"/>
        <end position="136"/>
    </location>
</feature>
<feature type="region of interest" description="G5" evidence="1">
    <location>
        <begin position="201"/>
        <end position="203"/>
    </location>
</feature>
<feature type="binding site" evidence="2">
    <location>
        <begin position="13"/>
        <end position="20"/>
    </location>
    <ligand>
        <name>GTP</name>
        <dbReference type="ChEBI" id="CHEBI:37565"/>
    </ligand>
</feature>
<feature type="binding site" evidence="2">
    <location>
        <begin position="79"/>
        <end position="83"/>
    </location>
    <ligand>
        <name>GTP</name>
        <dbReference type="ChEBI" id="CHEBI:37565"/>
    </ligand>
</feature>
<feature type="binding site" evidence="2">
    <location>
        <begin position="133"/>
        <end position="136"/>
    </location>
    <ligand>
        <name>GTP</name>
        <dbReference type="ChEBI" id="CHEBI:37565"/>
    </ligand>
</feature>
<proteinExistence type="inferred from homology"/>
<keyword id="KW-0342">GTP-binding</keyword>
<keyword id="KW-0396">Initiation factor</keyword>
<keyword id="KW-0547">Nucleotide-binding</keyword>
<keyword id="KW-0648">Protein biosynthesis</keyword>
<keyword id="KW-1185">Reference proteome</keyword>
<gene>
    <name evidence="2" type="primary">infB</name>
    <name type="ordered locus">PAE1513</name>
</gene>